<gene>
    <name evidence="1" type="primary">ruvB</name>
    <name type="ordered locus">Gura_1413</name>
</gene>
<organism>
    <name type="scientific">Geotalea uraniireducens (strain Rf4)</name>
    <name type="common">Geobacter uraniireducens</name>
    <dbReference type="NCBI Taxonomy" id="351605"/>
    <lineage>
        <taxon>Bacteria</taxon>
        <taxon>Pseudomonadati</taxon>
        <taxon>Thermodesulfobacteriota</taxon>
        <taxon>Desulfuromonadia</taxon>
        <taxon>Geobacterales</taxon>
        <taxon>Geobacteraceae</taxon>
        <taxon>Geotalea</taxon>
    </lineage>
</organism>
<proteinExistence type="inferred from homology"/>
<sequence>MTRTITPSITDDDALIEATLRPRALDDYVGQEKAKGNLRIFIDAARGRDEALDHVLLYGPPGLGKTTLANIIACEMGVNIKSTSGPVIERPGDLAAILTNLEAHDVLFIDEIHRLSHVVEEILYPAMEDFQLDIIIGQGPSARTIKLDLPKFTLVGATTRAGLLSSPLRDRFGVISRLEFYTDEELAFIITRSARILGMEIKTDGAAEMARRSRGTPRIANRLLRRVRDFAQVKADGVITMKVVQDALALLEIDEMGFDQMDRMILLTIIDKFGGGPVGLDTIAAAISEESDTIEDVYEPFLIQNGFLNRTPRGRVATKAAYLHFGRIVPEPPQGKLF</sequence>
<evidence type="ECO:0000255" key="1">
    <source>
        <dbReference type="HAMAP-Rule" id="MF_00016"/>
    </source>
</evidence>
<name>RUVB_GEOUR</name>
<accession>A5G9Y2</accession>
<comment type="function">
    <text evidence="1">The RuvA-RuvB-RuvC complex processes Holliday junction (HJ) DNA during genetic recombination and DNA repair, while the RuvA-RuvB complex plays an important role in the rescue of blocked DNA replication forks via replication fork reversal (RFR). RuvA specifically binds to HJ cruciform DNA, conferring on it an open structure. The RuvB hexamer acts as an ATP-dependent pump, pulling dsDNA into and through the RuvAB complex. RuvB forms 2 homohexamers on either side of HJ DNA bound by 1 or 2 RuvA tetramers; 4 subunits per hexamer contact DNA at a time. Coordinated motions by a converter formed by DNA-disengaged RuvB subunits stimulates ATP hydrolysis and nucleotide exchange. Immobilization of the converter enables RuvB to convert the ATP-contained energy into a lever motion, pulling 2 nucleotides of DNA out of the RuvA tetramer per ATP hydrolyzed, thus driving DNA branch migration. The RuvB motors rotate together with the DNA substrate, which together with the progressing nucleotide cycle form the mechanistic basis for DNA recombination by continuous HJ branch migration. Branch migration allows RuvC to scan DNA until it finds its consensus sequence, where it cleaves and resolves cruciform DNA.</text>
</comment>
<comment type="catalytic activity">
    <reaction evidence="1">
        <text>ATP + H2O = ADP + phosphate + H(+)</text>
        <dbReference type="Rhea" id="RHEA:13065"/>
        <dbReference type="ChEBI" id="CHEBI:15377"/>
        <dbReference type="ChEBI" id="CHEBI:15378"/>
        <dbReference type="ChEBI" id="CHEBI:30616"/>
        <dbReference type="ChEBI" id="CHEBI:43474"/>
        <dbReference type="ChEBI" id="CHEBI:456216"/>
    </reaction>
</comment>
<comment type="subunit">
    <text evidence="1">Homohexamer. Forms an RuvA(8)-RuvB(12)-Holliday junction (HJ) complex. HJ DNA is sandwiched between 2 RuvA tetramers; dsDNA enters through RuvA and exits via RuvB. An RuvB hexamer assembles on each DNA strand where it exits the tetramer. Each RuvB hexamer is contacted by two RuvA subunits (via domain III) on 2 adjacent RuvB subunits; this complex drives branch migration. In the full resolvosome a probable DNA-RuvA(4)-RuvB(12)-RuvC(2) complex forms which resolves the HJ.</text>
</comment>
<comment type="subcellular location">
    <subcellularLocation>
        <location evidence="1">Cytoplasm</location>
    </subcellularLocation>
</comment>
<comment type="domain">
    <text evidence="1">Has 3 domains, the large (RuvB-L) and small ATPase (RuvB-S) domains and the C-terminal head (RuvB-H) domain. The head domain binds DNA, while the ATPase domains jointly bind ATP, ADP or are empty depending on the state of the subunit in the translocation cycle. During a single DNA translocation step the structure of each domain remains the same, but their relative positions change.</text>
</comment>
<comment type="similarity">
    <text evidence="1">Belongs to the RuvB family.</text>
</comment>
<feature type="chain" id="PRO_1000074086" description="Holliday junction branch migration complex subunit RuvB">
    <location>
        <begin position="1"/>
        <end position="338"/>
    </location>
</feature>
<feature type="region of interest" description="Large ATPase domain (RuvB-L)" evidence="1">
    <location>
        <begin position="1"/>
        <end position="181"/>
    </location>
</feature>
<feature type="region of interest" description="Small ATPAse domain (RuvB-S)" evidence="1">
    <location>
        <begin position="182"/>
        <end position="252"/>
    </location>
</feature>
<feature type="region of interest" description="Head domain (RuvB-H)" evidence="1">
    <location>
        <begin position="255"/>
        <end position="338"/>
    </location>
</feature>
<feature type="binding site" evidence="1">
    <location>
        <position position="20"/>
    </location>
    <ligand>
        <name>ATP</name>
        <dbReference type="ChEBI" id="CHEBI:30616"/>
    </ligand>
</feature>
<feature type="binding site" evidence="1">
    <location>
        <position position="21"/>
    </location>
    <ligand>
        <name>ATP</name>
        <dbReference type="ChEBI" id="CHEBI:30616"/>
    </ligand>
</feature>
<feature type="binding site" evidence="1">
    <location>
        <position position="62"/>
    </location>
    <ligand>
        <name>ATP</name>
        <dbReference type="ChEBI" id="CHEBI:30616"/>
    </ligand>
</feature>
<feature type="binding site" evidence="1">
    <location>
        <position position="65"/>
    </location>
    <ligand>
        <name>ATP</name>
        <dbReference type="ChEBI" id="CHEBI:30616"/>
    </ligand>
</feature>
<feature type="binding site" evidence="1">
    <location>
        <position position="66"/>
    </location>
    <ligand>
        <name>ATP</name>
        <dbReference type="ChEBI" id="CHEBI:30616"/>
    </ligand>
</feature>
<feature type="binding site" evidence="1">
    <location>
        <position position="66"/>
    </location>
    <ligand>
        <name>Mg(2+)</name>
        <dbReference type="ChEBI" id="CHEBI:18420"/>
    </ligand>
</feature>
<feature type="binding site" evidence="1">
    <location>
        <position position="67"/>
    </location>
    <ligand>
        <name>ATP</name>
        <dbReference type="ChEBI" id="CHEBI:30616"/>
    </ligand>
</feature>
<feature type="binding site" evidence="1">
    <location>
        <begin position="128"/>
        <end position="130"/>
    </location>
    <ligand>
        <name>ATP</name>
        <dbReference type="ChEBI" id="CHEBI:30616"/>
    </ligand>
</feature>
<feature type="binding site" evidence="1">
    <location>
        <position position="171"/>
    </location>
    <ligand>
        <name>ATP</name>
        <dbReference type="ChEBI" id="CHEBI:30616"/>
    </ligand>
</feature>
<feature type="binding site" evidence="1">
    <location>
        <position position="181"/>
    </location>
    <ligand>
        <name>ATP</name>
        <dbReference type="ChEBI" id="CHEBI:30616"/>
    </ligand>
</feature>
<feature type="binding site" evidence="1">
    <location>
        <position position="218"/>
    </location>
    <ligand>
        <name>ATP</name>
        <dbReference type="ChEBI" id="CHEBI:30616"/>
    </ligand>
</feature>
<feature type="binding site" evidence="1">
    <location>
        <position position="310"/>
    </location>
    <ligand>
        <name>DNA</name>
        <dbReference type="ChEBI" id="CHEBI:16991"/>
    </ligand>
</feature>
<feature type="binding site" evidence="1">
    <location>
        <position position="315"/>
    </location>
    <ligand>
        <name>DNA</name>
        <dbReference type="ChEBI" id="CHEBI:16991"/>
    </ligand>
</feature>
<dbReference type="EC" id="3.6.4.-" evidence="1"/>
<dbReference type="EMBL" id="CP000698">
    <property type="protein sequence ID" value="ABQ25614.1"/>
    <property type="molecule type" value="Genomic_DNA"/>
</dbReference>
<dbReference type="RefSeq" id="WP_011938330.1">
    <property type="nucleotide sequence ID" value="NC_009483.1"/>
</dbReference>
<dbReference type="SMR" id="A5G9Y2"/>
<dbReference type="STRING" id="351605.Gura_1413"/>
<dbReference type="KEGG" id="gur:Gura_1413"/>
<dbReference type="HOGENOM" id="CLU_055599_1_0_7"/>
<dbReference type="OrthoDB" id="9804478at2"/>
<dbReference type="Proteomes" id="UP000006695">
    <property type="component" value="Chromosome"/>
</dbReference>
<dbReference type="GO" id="GO:0005737">
    <property type="term" value="C:cytoplasm"/>
    <property type="evidence" value="ECO:0007669"/>
    <property type="project" value="UniProtKB-SubCell"/>
</dbReference>
<dbReference type="GO" id="GO:0048476">
    <property type="term" value="C:Holliday junction resolvase complex"/>
    <property type="evidence" value="ECO:0007669"/>
    <property type="project" value="UniProtKB-UniRule"/>
</dbReference>
<dbReference type="GO" id="GO:0005524">
    <property type="term" value="F:ATP binding"/>
    <property type="evidence" value="ECO:0007669"/>
    <property type="project" value="UniProtKB-UniRule"/>
</dbReference>
<dbReference type="GO" id="GO:0016887">
    <property type="term" value="F:ATP hydrolysis activity"/>
    <property type="evidence" value="ECO:0007669"/>
    <property type="project" value="InterPro"/>
</dbReference>
<dbReference type="GO" id="GO:0000400">
    <property type="term" value="F:four-way junction DNA binding"/>
    <property type="evidence" value="ECO:0007669"/>
    <property type="project" value="UniProtKB-UniRule"/>
</dbReference>
<dbReference type="GO" id="GO:0009378">
    <property type="term" value="F:four-way junction helicase activity"/>
    <property type="evidence" value="ECO:0007669"/>
    <property type="project" value="InterPro"/>
</dbReference>
<dbReference type="GO" id="GO:0006310">
    <property type="term" value="P:DNA recombination"/>
    <property type="evidence" value="ECO:0007669"/>
    <property type="project" value="UniProtKB-UniRule"/>
</dbReference>
<dbReference type="GO" id="GO:0006281">
    <property type="term" value="P:DNA repair"/>
    <property type="evidence" value="ECO:0007669"/>
    <property type="project" value="UniProtKB-UniRule"/>
</dbReference>
<dbReference type="CDD" id="cd00009">
    <property type="entry name" value="AAA"/>
    <property type="match status" value="1"/>
</dbReference>
<dbReference type="FunFam" id="3.40.50.300:FF:000073">
    <property type="entry name" value="Holliday junction ATP-dependent DNA helicase RuvB"/>
    <property type="match status" value="1"/>
</dbReference>
<dbReference type="Gene3D" id="1.10.8.60">
    <property type="match status" value="1"/>
</dbReference>
<dbReference type="Gene3D" id="3.40.50.300">
    <property type="entry name" value="P-loop containing nucleotide triphosphate hydrolases"/>
    <property type="match status" value="1"/>
</dbReference>
<dbReference type="Gene3D" id="1.10.10.10">
    <property type="entry name" value="Winged helix-like DNA-binding domain superfamily/Winged helix DNA-binding domain"/>
    <property type="match status" value="1"/>
</dbReference>
<dbReference type="HAMAP" id="MF_00016">
    <property type="entry name" value="DNA_HJ_migration_RuvB"/>
    <property type="match status" value="1"/>
</dbReference>
<dbReference type="InterPro" id="IPR003593">
    <property type="entry name" value="AAA+_ATPase"/>
</dbReference>
<dbReference type="InterPro" id="IPR041445">
    <property type="entry name" value="AAA_lid_4"/>
</dbReference>
<dbReference type="InterPro" id="IPR004605">
    <property type="entry name" value="DNA_helicase_Holl-junc_RuvB"/>
</dbReference>
<dbReference type="InterPro" id="IPR027417">
    <property type="entry name" value="P-loop_NTPase"/>
</dbReference>
<dbReference type="InterPro" id="IPR008824">
    <property type="entry name" value="RuvB-like_N"/>
</dbReference>
<dbReference type="InterPro" id="IPR008823">
    <property type="entry name" value="RuvB_C"/>
</dbReference>
<dbReference type="InterPro" id="IPR036388">
    <property type="entry name" value="WH-like_DNA-bd_sf"/>
</dbReference>
<dbReference type="InterPro" id="IPR036390">
    <property type="entry name" value="WH_DNA-bd_sf"/>
</dbReference>
<dbReference type="NCBIfam" id="NF000868">
    <property type="entry name" value="PRK00080.1"/>
    <property type="match status" value="1"/>
</dbReference>
<dbReference type="NCBIfam" id="TIGR00635">
    <property type="entry name" value="ruvB"/>
    <property type="match status" value="1"/>
</dbReference>
<dbReference type="PANTHER" id="PTHR42848">
    <property type="match status" value="1"/>
</dbReference>
<dbReference type="PANTHER" id="PTHR42848:SF1">
    <property type="entry name" value="HOLLIDAY JUNCTION BRANCH MIGRATION COMPLEX SUBUNIT RUVB"/>
    <property type="match status" value="1"/>
</dbReference>
<dbReference type="Pfam" id="PF17864">
    <property type="entry name" value="AAA_lid_4"/>
    <property type="match status" value="1"/>
</dbReference>
<dbReference type="Pfam" id="PF05491">
    <property type="entry name" value="RuvB_C"/>
    <property type="match status" value="1"/>
</dbReference>
<dbReference type="Pfam" id="PF05496">
    <property type="entry name" value="RuvB_N"/>
    <property type="match status" value="1"/>
</dbReference>
<dbReference type="SMART" id="SM00382">
    <property type="entry name" value="AAA"/>
    <property type="match status" value="1"/>
</dbReference>
<dbReference type="SUPFAM" id="SSF52540">
    <property type="entry name" value="P-loop containing nucleoside triphosphate hydrolases"/>
    <property type="match status" value="1"/>
</dbReference>
<dbReference type="SUPFAM" id="SSF46785">
    <property type="entry name" value="Winged helix' DNA-binding domain"/>
    <property type="match status" value="1"/>
</dbReference>
<protein>
    <recommendedName>
        <fullName evidence="1">Holliday junction branch migration complex subunit RuvB</fullName>
        <ecNumber evidence="1">3.6.4.-</ecNumber>
    </recommendedName>
</protein>
<reference key="1">
    <citation type="submission" date="2007-05" db="EMBL/GenBank/DDBJ databases">
        <title>Complete sequence of Geobacter uraniireducens Rf4.</title>
        <authorList>
            <consortium name="US DOE Joint Genome Institute"/>
            <person name="Copeland A."/>
            <person name="Lucas S."/>
            <person name="Lapidus A."/>
            <person name="Barry K."/>
            <person name="Detter J.C."/>
            <person name="Glavina del Rio T."/>
            <person name="Hammon N."/>
            <person name="Israni S."/>
            <person name="Dalin E."/>
            <person name="Tice H."/>
            <person name="Pitluck S."/>
            <person name="Chertkov O."/>
            <person name="Brettin T."/>
            <person name="Bruce D."/>
            <person name="Han C."/>
            <person name="Schmutz J."/>
            <person name="Larimer F."/>
            <person name="Land M."/>
            <person name="Hauser L."/>
            <person name="Kyrpides N."/>
            <person name="Mikhailova N."/>
            <person name="Shelobolina E."/>
            <person name="Aklujkar M."/>
            <person name="Lovley D."/>
            <person name="Richardson P."/>
        </authorList>
    </citation>
    <scope>NUCLEOTIDE SEQUENCE [LARGE SCALE GENOMIC DNA]</scope>
    <source>
        <strain>ATCC BAA-1134 / JCM 13001 / Rf4</strain>
    </source>
</reference>
<keyword id="KW-0067">ATP-binding</keyword>
<keyword id="KW-0963">Cytoplasm</keyword>
<keyword id="KW-0227">DNA damage</keyword>
<keyword id="KW-0233">DNA recombination</keyword>
<keyword id="KW-0234">DNA repair</keyword>
<keyword id="KW-0238">DNA-binding</keyword>
<keyword id="KW-0378">Hydrolase</keyword>
<keyword id="KW-0547">Nucleotide-binding</keyword>
<keyword id="KW-1185">Reference proteome</keyword>